<feature type="chain" id="PRO_0000429476" description="[F-actin]-monooxygenase mical2b">
    <location>
        <begin position="1"/>
        <end position="1679"/>
    </location>
</feature>
<feature type="domain" description="Calponin-homology (CH)" evidence="5">
    <location>
        <begin position="516"/>
        <end position="619"/>
    </location>
</feature>
<feature type="domain" description="LIM zinc-binding" evidence="6">
    <location>
        <begin position="1011"/>
        <end position="1073"/>
    </location>
</feature>
<feature type="domain" description="bMERB" evidence="7">
    <location>
        <begin position="1517"/>
        <end position="1667"/>
    </location>
</feature>
<feature type="region of interest" description="Monooxygenase domain" evidence="1">
    <location>
        <begin position="2"/>
        <end position="494"/>
    </location>
</feature>
<feature type="region of interest" description="Disordered" evidence="8">
    <location>
        <begin position="661"/>
        <end position="772"/>
    </location>
</feature>
<feature type="region of interest" description="Disordered" evidence="8">
    <location>
        <begin position="818"/>
        <end position="838"/>
    </location>
</feature>
<feature type="region of interest" description="Disordered" evidence="8">
    <location>
        <begin position="874"/>
        <end position="907"/>
    </location>
</feature>
<feature type="region of interest" description="Disordered" evidence="8">
    <location>
        <begin position="1073"/>
        <end position="1163"/>
    </location>
</feature>
<feature type="region of interest" description="Disordered" evidence="8">
    <location>
        <begin position="1194"/>
        <end position="1247"/>
    </location>
</feature>
<feature type="region of interest" description="Disordered" evidence="8">
    <location>
        <begin position="1259"/>
        <end position="1283"/>
    </location>
</feature>
<feature type="region of interest" description="Disordered" evidence="8">
    <location>
        <begin position="1302"/>
        <end position="1342"/>
    </location>
</feature>
<feature type="region of interest" description="Disordered" evidence="8">
    <location>
        <begin position="1473"/>
        <end position="1509"/>
    </location>
</feature>
<feature type="short sequence motif" description="Nuclear localization signal">
    <location>
        <begin position="658"/>
        <end position="679"/>
    </location>
</feature>
<feature type="compositionally biased region" description="Basic and acidic residues" evidence="8">
    <location>
        <begin position="662"/>
        <end position="674"/>
    </location>
</feature>
<feature type="compositionally biased region" description="Basic and acidic residues" evidence="8">
    <location>
        <begin position="697"/>
        <end position="707"/>
    </location>
</feature>
<feature type="compositionally biased region" description="Polar residues" evidence="8">
    <location>
        <begin position="874"/>
        <end position="888"/>
    </location>
</feature>
<feature type="compositionally biased region" description="Low complexity" evidence="8">
    <location>
        <begin position="1086"/>
        <end position="1099"/>
    </location>
</feature>
<feature type="compositionally biased region" description="Polar residues" evidence="8">
    <location>
        <begin position="1112"/>
        <end position="1123"/>
    </location>
</feature>
<feature type="compositionally biased region" description="Basic and acidic residues" evidence="8">
    <location>
        <begin position="1133"/>
        <end position="1143"/>
    </location>
</feature>
<feature type="compositionally biased region" description="Low complexity" evidence="8">
    <location>
        <begin position="1144"/>
        <end position="1154"/>
    </location>
</feature>
<feature type="compositionally biased region" description="Acidic residues" evidence="8">
    <location>
        <begin position="1202"/>
        <end position="1211"/>
    </location>
</feature>
<feature type="compositionally biased region" description="Polar residues" evidence="8">
    <location>
        <begin position="1220"/>
        <end position="1242"/>
    </location>
</feature>
<feature type="compositionally biased region" description="Low complexity" evidence="8">
    <location>
        <begin position="1259"/>
        <end position="1270"/>
    </location>
</feature>
<feature type="compositionally biased region" description="Polar residues" evidence="8">
    <location>
        <begin position="1302"/>
        <end position="1325"/>
    </location>
</feature>
<feature type="compositionally biased region" description="Pro residues" evidence="8">
    <location>
        <begin position="1333"/>
        <end position="1342"/>
    </location>
</feature>
<feature type="compositionally biased region" description="Low complexity" evidence="8">
    <location>
        <begin position="1475"/>
        <end position="1489"/>
    </location>
</feature>
<feature type="binding site" evidence="1">
    <location>
        <begin position="97"/>
        <end position="125"/>
    </location>
    <ligand>
        <name>FAD</name>
        <dbReference type="ChEBI" id="CHEBI:57692"/>
    </ligand>
</feature>
<feature type="binding site" evidence="1">
    <location>
        <position position="97"/>
    </location>
    <ligand>
        <name>FAD</name>
        <dbReference type="ChEBI" id="CHEBI:57692"/>
    </ligand>
</feature>
<feature type="binding site" evidence="1">
    <location>
        <position position="116"/>
    </location>
    <ligand>
        <name>FAD</name>
        <dbReference type="ChEBI" id="CHEBI:57692"/>
    </ligand>
</feature>
<feature type="binding site" evidence="1">
    <location>
        <position position="118"/>
    </location>
    <ligand>
        <name>FAD</name>
        <dbReference type="ChEBI" id="CHEBI:57692"/>
    </ligand>
</feature>
<feature type="binding site" evidence="1">
    <location>
        <position position="123"/>
    </location>
    <ligand>
        <name>FAD</name>
        <dbReference type="ChEBI" id="CHEBI:57692"/>
    </ligand>
</feature>
<feature type="binding site" evidence="1">
    <location>
        <position position="125"/>
    </location>
    <ligand>
        <name>FAD</name>
        <dbReference type="ChEBI" id="CHEBI:57692"/>
    </ligand>
</feature>
<feature type="binding site" evidence="1">
    <location>
        <position position="398"/>
    </location>
    <ligand>
        <name>FAD</name>
        <dbReference type="ChEBI" id="CHEBI:57692"/>
    </ligand>
</feature>
<feature type="splice variant" id="VSP_061325" description="In isoform 1.">
    <location>
        <begin position="731"/>
        <end position="996"/>
    </location>
</feature>
<feature type="splice variant" id="VSP_061326" description="In isoform 4.">
    <original>TDESSPAVSPSSPPQTIPESSTLSCLLSPAPSLTHKQCSEASETHLKADKHTEIRRVERLDPSKQRTVGKVSSAIGVKAATLAILYETDHRPNNPITLSLTEARRCAESGLV</original>
    <variation>V</variation>
    <location>
        <begin position="886"/>
        <end position="997"/>
    </location>
</feature>
<feature type="splice variant" id="VSP_061327" description="In isoform 2.">
    <original>GGEFDSSTQQDLQ</original>
    <variation>VCFKFPMLQALIG</variation>
    <location>
        <begin position="1108"/>
        <end position="1120"/>
    </location>
</feature>
<feature type="splice variant" id="VSP_061328" description="In isoform 4 and isoform 3.">
    <original>GGEFDSSTQQDL</original>
    <variation>EAAFLSQSHSFP</variation>
    <location>
        <begin position="1108"/>
        <end position="1119"/>
    </location>
</feature>
<feature type="splice variant" id="VSP_061329" description="In isoform 4 and isoform 3.">
    <location>
        <begin position="1120"/>
        <end position="1679"/>
    </location>
</feature>
<feature type="splice variant" id="VSP_061330" description="In isoform 2.">
    <location>
        <begin position="1121"/>
        <end position="1679"/>
    </location>
</feature>
<feature type="sequence conflict" description="In Ref. 1; AFS28886." evidence="10" ref="1">
    <original>G</original>
    <variation>D</variation>
    <location>
        <position position="879"/>
    </location>
</feature>
<feature type="sequence conflict" description="In Ref. 3; ADQ13088." evidence="10" ref="3">
    <original>S</original>
    <variation>P</variation>
    <location>
        <position position="1088"/>
    </location>
</feature>
<feature type="sequence conflict" description="In Ref. 3; ADQ13088." evidence="10" ref="3">
    <original>S</original>
    <variation>A</variation>
    <location>
        <position position="1224"/>
    </location>
</feature>
<feature type="sequence conflict" description="In Ref. 3; ADQ13088." evidence="10" ref="3">
    <original>Q</original>
    <variation>E</variation>
    <location>
        <position position="1314"/>
    </location>
</feature>
<feature type="sequence conflict" description="In Ref. 3; ADQ13088." evidence="10" ref="3">
    <original>H</original>
    <variation>Y</variation>
    <location>
        <position position="1327"/>
    </location>
</feature>
<feature type="sequence conflict" description="In Ref. 3; ADQ13088." evidence="10" ref="3">
    <original>K</original>
    <variation>E</variation>
    <location>
        <position position="1485"/>
    </location>
</feature>
<feature type="sequence conflict" description="In Ref. 3; ADQ13088." evidence="10" ref="3">
    <original>G</original>
    <variation>D</variation>
    <location>
        <position position="1502"/>
    </location>
</feature>
<feature type="sequence conflict" description="In Ref. 3; ADQ13088." evidence="10" ref="3">
    <original>I</original>
    <variation>M</variation>
    <location>
        <position position="1511"/>
    </location>
</feature>
<feature type="sequence conflict" description="In Ref. 1; AFS28886." evidence="10" ref="1">
    <original>G</original>
    <variation>D</variation>
    <location sequence="F1RA39-3">
        <position position="879"/>
    </location>
</feature>
<reference key="1">
    <citation type="submission" date="2012-07" db="EMBL/GenBank/DDBJ databases">
        <title>microtubule associated monoxygenase calponin and LIM domain containing 2b play a vital role in myofibril organization in zebrafish.</title>
        <authorList>
            <person name="Ji X."/>
            <person name="Du S."/>
        </authorList>
    </citation>
    <scope>NUCLEOTIDE SEQUENCE [MRNA] (ISOFORMS 1; 2; 3 AND 4)</scope>
</reference>
<reference key="2">
    <citation type="journal article" date="2013" name="Nature">
        <title>The zebrafish reference genome sequence and its relationship to the human genome.</title>
        <authorList>
            <person name="Howe K."/>
            <person name="Clark M.D."/>
            <person name="Torroja C.F."/>
            <person name="Torrance J."/>
            <person name="Berthelot C."/>
            <person name="Muffato M."/>
            <person name="Collins J.E."/>
            <person name="Humphray S."/>
            <person name="McLaren K."/>
            <person name="Matthews L."/>
            <person name="McLaren S."/>
            <person name="Sealy I."/>
            <person name="Caccamo M."/>
            <person name="Churcher C."/>
            <person name="Scott C."/>
            <person name="Barrett J.C."/>
            <person name="Koch R."/>
            <person name="Rauch G.J."/>
            <person name="White S."/>
            <person name="Chow W."/>
            <person name="Kilian B."/>
            <person name="Quintais L.T."/>
            <person name="Guerra-Assuncao J.A."/>
            <person name="Zhou Y."/>
            <person name="Gu Y."/>
            <person name="Yen J."/>
            <person name="Vogel J.H."/>
            <person name="Eyre T."/>
            <person name="Redmond S."/>
            <person name="Banerjee R."/>
            <person name="Chi J."/>
            <person name="Fu B."/>
            <person name="Langley E."/>
            <person name="Maguire S.F."/>
            <person name="Laird G.K."/>
            <person name="Lloyd D."/>
            <person name="Kenyon E."/>
            <person name="Donaldson S."/>
            <person name="Sehra H."/>
            <person name="Almeida-King J."/>
            <person name="Loveland J."/>
            <person name="Trevanion S."/>
            <person name="Jones M."/>
            <person name="Quail M."/>
            <person name="Willey D."/>
            <person name="Hunt A."/>
            <person name="Burton J."/>
            <person name="Sims S."/>
            <person name="McLay K."/>
            <person name="Plumb B."/>
            <person name="Davis J."/>
            <person name="Clee C."/>
            <person name="Oliver K."/>
            <person name="Clark R."/>
            <person name="Riddle C."/>
            <person name="Elliot D."/>
            <person name="Threadgold G."/>
            <person name="Harden G."/>
            <person name="Ware D."/>
            <person name="Begum S."/>
            <person name="Mortimore B."/>
            <person name="Kerry G."/>
            <person name="Heath P."/>
            <person name="Phillimore B."/>
            <person name="Tracey A."/>
            <person name="Corby N."/>
            <person name="Dunn M."/>
            <person name="Johnson C."/>
            <person name="Wood J."/>
            <person name="Clark S."/>
            <person name="Pelan S."/>
            <person name="Griffiths G."/>
            <person name="Smith M."/>
            <person name="Glithero R."/>
            <person name="Howden P."/>
            <person name="Barker N."/>
            <person name="Lloyd C."/>
            <person name="Stevens C."/>
            <person name="Harley J."/>
            <person name="Holt K."/>
            <person name="Panagiotidis G."/>
            <person name="Lovell J."/>
            <person name="Beasley H."/>
            <person name="Henderson C."/>
            <person name="Gordon D."/>
            <person name="Auger K."/>
            <person name="Wright D."/>
            <person name="Collins J."/>
            <person name="Raisen C."/>
            <person name="Dyer L."/>
            <person name="Leung K."/>
            <person name="Robertson L."/>
            <person name="Ambridge K."/>
            <person name="Leongamornlert D."/>
            <person name="McGuire S."/>
            <person name="Gilderthorp R."/>
            <person name="Griffiths C."/>
            <person name="Manthravadi D."/>
            <person name="Nichol S."/>
            <person name="Barker G."/>
            <person name="Whitehead S."/>
            <person name="Kay M."/>
            <person name="Brown J."/>
            <person name="Murnane C."/>
            <person name="Gray E."/>
            <person name="Humphries M."/>
            <person name="Sycamore N."/>
            <person name="Barker D."/>
            <person name="Saunders D."/>
            <person name="Wallis J."/>
            <person name="Babbage A."/>
            <person name="Hammond S."/>
            <person name="Mashreghi-Mohammadi M."/>
            <person name="Barr L."/>
            <person name="Martin S."/>
            <person name="Wray P."/>
            <person name="Ellington A."/>
            <person name="Matthews N."/>
            <person name="Ellwood M."/>
            <person name="Woodmansey R."/>
            <person name="Clark G."/>
            <person name="Cooper J."/>
            <person name="Tromans A."/>
            <person name="Grafham D."/>
            <person name="Skuce C."/>
            <person name="Pandian R."/>
            <person name="Andrews R."/>
            <person name="Harrison E."/>
            <person name="Kimberley A."/>
            <person name="Garnett J."/>
            <person name="Fosker N."/>
            <person name="Hall R."/>
            <person name="Garner P."/>
            <person name="Kelly D."/>
            <person name="Bird C."/>
            <person name="Palmer S."/>
            <person name="Gehring I."/>
            <person name="Berger A."/>
            <person name="Dooley C.M."/>
            <person name="Ersan-Urun Z."/>
            <person name="Eser C."/>
            <person name="Geiger H."/>
            <person name="Geisler M."/>
            <person name="Karotki L."/>
            <person name="Kirn A."/>
            <person name="Konantz J."/>
            <person name="Konantz M."/>
            <person name="Oberlander M."/>
            <person name="Rudolph-Geiger S."/>
            <person name="Teucke M."/>
            <person name="Lanz C."/>
            <person name="Raddatz G."/>
            <person name="Osoegawa K."/>
            <person name="Zhu B."/>
            <person name="Rapp A."/>
            <person name="Widaa S."/>
            <person name="Langford C."/>
            <person name="Yang F."/>
            <person name="Schuster S.C."/>
            <person name="Carter N.P."/>
            <person name="Harrow J."/>
            <person name="Ning Z."/>
            <person name="Herrero J."/>
            <person name="Searle S.M."/>
            <person name="Enright A."/>
            <person name="Geisler R."/>
            <person name="Plasterk R.H."/>
            <person name="Lee C."/>
            <person name="Westerfield M."/>
            <person name="de Jong P.J."/>
            <person name="Zon L.I."/>
            <person name="Postlethwait J.H."/>
            <person name="Nusslein-Volhard C."/>
            <person name="Hubbard T.J."/>
            <person name="Roest Crollius H."/>
            <person name="Rogers J."/>
            <person name="Stemple D.L."/>
        </authorList>
    </citation>
    <scope>NUCLEOTIDE SEQUENCE [LARGE SCALE GENOMIC DNA]</scope>
    <source>
        <strain>Tuebingen</strain>
    </source>
</reference>
<reference key="3">
    <citation type="journal article" date="2010" name="J. Genet. Genomics">
        <title>Identification and expression analysis of mical family genes in zebrafish.</title>
        <authorList>
            <person name="Xue Y."/>
            <person name="Kuok C."/>
            <person name="Xiao A."/>
            <person name="Zhu Z."/>
            <person name="Lin S."/>
            <person name="Zhang B."/>
        </authorList>
    </citation>
    <scope>NUCLEOTIDE SEQUENCE [MRNA] OF 93-1571 (ISOFORM 1)</scope>
    <source>
        <strain>Tuebingen</strain>
    </source>
</reference>
<reference key="4">
    <citation type="journal article" date="2014" name="Cell">
        <title>Redox modification of nuclear actin by MICAL-2 regulates SRF signaling.</title>
        <authorList>
            <person name="Lundquist M.R."/>
            <person name="Storaska A.J."/>
            <person name="Liu T.C."/>
            <person name="Larsen S.D."/>
            <person name="Evans T."/>
            <person name="Neubig R.R."/>
            <person name="Jaffrey S.R."/>
        </authorList>
    </citation>
    <scope>FUNCTION</scope>
    <scope>DISRUPTION PHENOTYPE</scope>
</reference>
<proteinExistence type="evidence at transcript level"/>
<protein>
    <recommendedName>
        <fullName evidence="2">[F-actin]-monooxygenase mical2b</fullName>
        <ecNumber evidence="2">1.14.13.225</ecNumber>
    </recommendedName>
    <alternativeName>
        <fullName>Molecule interacting with CasL protein 2B</fullName>
        <shortName>MICAL-2</shortName>
    </alternativeName>
</protein>
<dbReference type="EC" id="1.14.13.225" evidence="2"/>
<dbReference type="EMBL" id="JX291154">
    <property type="protein sequence ID" value="AFS28883.1"/>
    <property type="molecule type" value="mRNA"/>
</dbReference>
<dbReference type="EMBL" id="JX291155">
    <property type="protein sequence ID" value="AFS28884.1"/>
    <property type="molecule type" value="mRNA"/>
</dbReference>
<dbReference type="EMBL" id="JX291156">
    <property type="protein sequence ID" value="AFS28885.1"/>
    <property type="molecule type" value="mRNA"/>
</dbReference>
<dbReference type="EMBL" id="JX291157">
    <property type="protein sequence ID" value="AFS28886.1"/>
    <property type="molecule type" value="mRNA"/>
</dbReference>
<dbReference type="EMBL" id="BX908400">
    <property type="status" value="NOT_ANNOTATED_CDS"/>
    <property type="molecule type" value="Genomic_DNA"/>
</dbReference>
<dbReference type="EMBL" id="CR388031">
    <property type="status" value="NOT_ANNOTATED_CDS"/>
    <property type="molecule type" value="Genomic_DNA"/>
</dbReference>
<dbReference type="EMBL" id="CR759887">
    <property type="status" value="NOT_ANNOTATED_CDS"/>
    <property type="molecule type" value="Genomic_DNA"/>
</dbReference>
<dbReference type="EMBL" id="HM151006">
    <property type="protein sequence ID" value="ADQ13088.1"/>
    <property type="molecule type" value="mRNA"/>
</dbReference>
<dbReference type="RefSeq" id="NP_001258842.1">
    <molecule id="F1RA39-1"/>
    <property type="nucleotide sequence ID" value="NM_001271913.2"/>
</dbReference>
<dbReference type="RefSeq" id="NP_001382796.1">
    <molecule id="F1RA39-3"/>
    <property type="nucleotide sequence ID" value="NM_001395867.1"/>
</dbReference>
<dbReference type="RefSeq" id="XP_005174396.1">
    <molecule id="F1RA39-5"/>
    <property type="nucleotide sequence ID" value="XM_005174339.5"/>
</dbReference>
<dbReference type="RefSeq" id="XP_005174399.1">
    <molecule id="F1RA39-1"/>
    <property type="nucleotide sequence ID" value="XM_005174342.5"/>
</dbReference>
<dbReference type="RefSeq" id="XP_005174402.1">
    <molecule id="F1RA39-3"/>
    <property type="nucleotide sequence ID" value="XM_005174345.3"/>
</dbReference>
<dbReference type="RefSeq" id="XP_021326189.1">
    <molecule id="F1RA39-5"/>
    <property type="nucleotide sequence ID" value="XM_021470514.2"/>
</dbReference>
<dbReference type="RefSeq" id="XP_021326195.1">
    <molecule id="F1RA39-2"/>
    <property type="nucleotide sequence ID" value="XM_021470520.2"/>
</dbReference>
<dbReference type="RefSeq" id="XP_068073509.1">
    <molecule id="F1RA39-2"/>
    <property type="nucleotide sequence ID" value="XM_068217408.1"/>
</dbReference>
<dbReference type="RefSeq" id="XP_068073510.1">
    <molecule id="F1RA39-2"/>
    <property type="nucleotide sequence ID" value="XM_068217409.1"/>
</dbReference>
<dbReference type="SMR" id="F1RA39"/>
<dbReference type="FunCoup" id="F1RA39">
    <property type="interactions" value="562"/>
</dbReference>
<dbReference type="STRING" id="7955.ENSDARP00000119970"/>
<dbReference type="PaxDb" id="7955-ENSDARP00000119970"/>
<dbReference type="Ensembl" id="ENSDART00000139013">
    <molecule id="F1RA39-5"/>
    <property type="protein sequence ID" value="ENSDARP00000119970"/>
    <property type="gene ID" value="ENSDARG00000020395"/>
</dbReference>
<dbReference type="GeneID" id="569564"/>
<dbReference type="KEGG" id="dre:569564"/>
<dbReference type="AGR" id="ZFIN:ZDB-GENE-061207-15"/>
<dbReference type="CTD" id="569564"/>
<dbReference type="ZFIN" id="ZDB-GENE-061207-15">
    <property type="gene designation" value="mical2b"/>
</dbReference>
<dbReference type="eggNOG" id="KOG1700">
    <property type="taxonomic scope" value="Eukaryota"/>
</dbReference>
<dbReference type="HOGENOM" id="CLU_000329_3_0_1"/>
<dbReference type="InParanoid" id="F1RA39"/>
<dbReference type="OrthoDB" id="20799at2759"/>
<dbReference type="TreeFam" id="TF324129"/>
<dbReference type="PRO" id="PR:F1RA39"/>
<dbReference type="Proteomes" id="UP000000437">
    <property type="component" value="Chromosome 25"/>
</dbReference>
<dbReference type="Bgee" id="ENSDARG00000020395">
    <property type="expression patterns" value="Expressed in heart and 47 other cell types or tissues"/>
</dbReference>
<dbReference type="ExpressionAtlas" id="F1RA39">
    <property type="expression patterns" value="baseline and differential"/>
</dbReference>
<dbReference type="GO" id="GO:0005737">
    <property type="term" value="C:cytoplasm"/>
    <property type="evidence" value="ECO:0007669"/>
    <property type="project" value="UniProtKB-SubCell"/>
</dbReference>
<dbReference type="GO" id="GO:0005634">
    <property type="term" value="C:nucleus"/>
    <property type="evidence" value="ECO:0000250"/>
    <property type="project" value="UniProtKB"/>
</dbReference>
<dbReference type="GO" id="GO:0003779">
    <property type="term" value="F:actin binding"/>
    <property type="evidence" value="ECO:0000250"/>
    <property type="project" value="UniProtKB"/>
</dbReference>
<dbReference type="GO" id="GO:0120501">
    <property type="term" value="F:F-actin monooxygenase activity"/>
    <property type="evidence" value="ECO:0007669"/>
    <property type="project" value="UniProtKB-EC"/>
</dbReference>
<dbReference type="GO" id="GO:0071949">
    <property type="term" value="F:FAD binding"/>
    <property type="evidence" value="ECO:0007669"/>
    <property type="project" value="InterPro"/>
</dbReference>
<dbReference type="GO" id="GO:0046872">
    <property type="term" value="F:metal ion binding"/>
    <property type="evidence" value="ECO:0007669"/>
    <property type="project" value="UniProtKB-KW"/>
</dbReference>
<dbReference type="GO" id="GO:0016491">
    <property type="term" value="F:oxidoreductase activity"/>
    <property type="evidence" value="ECO:0000250"/>
    <property type="project" value="UniProtKB"/>
</dbReference>
<dbReference type="GO" id="GO:0030042">
    <property type="term" value="P:actin filament depolymerization"/>
    <property type="evidence" value="ECO:0000250"/>
    <property type="project" value="UniProtKB"/>
</dbReference>
<dbReference type="GO" id="GO:0007010">
    <property type="term" value="P:cytoskeleton organization"/>
    <property type="evidence" value="ECO:0000250"/>
    <property type="project" value="UniProtKB"/>
</dbReference>
<dbReference type="GO" id="GO:0007507">
    <property type="term" value="P:heart development"/>
    <property type="evidence" value="ECO:0000315"/>
    <property type="project" value="UniProtKB"/>
</dbReference>
<dbReference type="GO" id="GO:0001947">
    <property type="term" value="P:heart looping"/>
    <property type="evidence" value="ECO:0000315"/>
    <property type="project" value="UniProtKB"/>
</dbReference>
<dbReference type="GO" id="GO:0045944">
    <property type="term" value="P:positive regulation of transcription by RNA polymerase II"/>
    <property type="evidence" value="ECO:0000250"/>
    <property type="project" value="UniProtKB"/>
</dbReference>
<dbReference type="CDD" id="cd21250">
    <property type="entry name" value="CH_MICAL2"/>
    <property type="match status" value="1"/>
</dbReference>
<dbReference type="CDD" id="cd09439">
    <property type="entry name" value="LIM_Mical"/>
    <property type="match status" value="1"/>
</dbReference>
<dbReference type="FunFam" id="3.50.50.60:FF:000004">
    <property type="entry name" value="protein-methionine sulfoxide oxidase MICAL2 isoform X1"/>
    <property type="match status" value="1"/>
</dbReference>
<dbReference type="Gene3D" id="1.10.418.10">
    <property type="entry name" value="Calponin-like domain"/>
    <property type="match status" value="1"/>
</dbReference>
<dbReference type="Gene3D" id="2.10.110.10">
    <property type="entry name" value="Cysteine Rich Protein"/>
    <property type="match status" value="1"/>
</dbReference>
<dbReference type="Gene3D" id="3.50.50.60">
    <property type="entry name" value="FAD/NAD(P)-binding domain"/>
    <property type="match status" value="1"/>
</dbReference>
<dbReference type="InterPro" id="IPR022735">
    <property type="entry name" value="bMERB_dom"/>
</dbReference>
<dbReference type="InterPro" id="IPR001715">
    <property type="entry name" value="CH_dom"/>
</dbReference>
<dbReference type="InterPro" id="IPR036872">
    <property type="entry name" value="CH_dom_sf"/>
</dbReference>
<dbReference type="InterPro" id="IPR050540">
    <property type="entry name" value="F-actin_Monoox_Mical"/>
</dbReference>
<dbReference type="InterPro" id="IPR002938">
    <property type="entry name" value="FAD-bd"/>
</dbReference>
<dbReference type="InterPro" id="IPR036188">
    <property type="entry name" value="FAD/NAD-bd_sf"/>
</dbReference>
<dbReference type="InterPro" id="IPR001781">
    <property type="entry name" value="Znf_LIM"/>
</dbReference>
<dbReference type="PANTHER" id="PTHR23167:SF39">
    <property type="entry name" value="[F-ACTIN]-MONOOXYGENASE MICAL2"/>
    <property type="match status" value="1"/>
</dbReference>
<dbReference type="PANTHER" id="PTHR23167">
    <property type="entry name" value="CALPONIN HOMOLOGY DOMAIN-CONTAINING PROTEIN DDB_G0272472-RELATED"/>
    <property type="match status" value="1"/>
</dbReference>
<dbReference type="Pfam" id="PF12130">
    <property type="entry name" value="bMERB_dom"/>
    <property type="match status" value="1"/>
</dbReference>
<dbReference type="Pfam" id="PF00307">
    <property type="entry name" value="CH"/>
    <property type="match status" value="1"/>
</dbReference>
<dbReference type="Pfam" id="PF01494">
    <property type="entry name" value="FAD_binding_3"/>
    <property type="match status" value="1"/>
</dbReference>
<dbReference type="Pfam" id="PF00412">
    <property type="entry name" value="LIM"/>
    <property type="match status" value="1"/>
</dbReference>
<dbReference type="Pfam" id="PF25413">
    <property type="entry name" value="Rossman_Mical"/>
    <property type="match status" value="1"/>
</dbReference>
<dbReference type="PRINTS" id="PR00420">
    <property type="entry name" value="RNGMNOXGNASE"/>
</dbReference>
<dbReference type="SMART" id="SM00033">
    <property type="entry name" value="CH"/>
    <property type="match status" value="1"/>
</dbReference>
<dbReference type="SMART" id="SM01203">
    <property type="entry name" value="DUF3585"/>
    <property type="match status" value="1"/>
</dbReference>
<dbReference type="SMART" id="SM00132">
    <property type="entry name" value="LIM"/>
    <property type="match status" value="1"/>
</dbReference>
<dbReference type="SUPFAM" id="SSF47576">
    <property type="entry name" value="Calponin-homology domain, CH-domain"/>
    <property type="match status" value="1"/>
</dbReference>
<dbReference type="SUPFAM" id="SSF51905">
    <property type="entry name" value="FAD/NAD(P)-binding domain"/>
    <property type="match status" value="1"/>
</dbReference>
<dbReference type="SUPFAM" id="SSF57716">
    <property type="entry name" value="Glucocorticoid receptor-like (DNA-binding domain)"/>
    <property type="match status" value="2"/>
</dbReference>
<dbReference type="PROSITE" id="PS51848">
    <property type="entry name" value="BMERB"/>
    <property type="match status" value="1"/>
</dbReference>
<dbReference type="PROSITE" id="PS50021">
    <property type="entry name" value="CH"/>
    <property type="match status" value="1"/>
</dbReference>
<dbReference type="PROSITE" id="PS00478">
    <property type="entry name" value="LIM_DOMAIN_1"/>
    <property type="match status" value="1"/>
</dbReference>
<dbReference type="PROSITE" id="PS50023">
    <property type="entry name" value="LIM_DOMAIN_2"/>
    <property type="match status" value="1"/>
</dbReference>
<keyword id="KW-0009">Actin-binding</keyword>
<keyword id="KW-0025">Alternative splicing</keyword>
<keyword id="KW-0963">Cytoplasm</keyword>
<keyword id="KW-0274">FAD</keyword>
<keyword id="KW-0285">Flavoprotein</keyword>
<keyword id="KW-0440">LIM domain</keyword>
<keyword id="KW-0479">Metal-binding</keyword>
<keyword id="KW-0503">Monooxygenase</keyword>
<keyword id="KW-0521">NADP</keyword>
<keyword id="KW-0539">Nucleus</keyword>
<keyword id="KW-0560">Oxidoreductase</keyword>
<keyword id="KW-1185">Reference proteome</keyword>
<keyword id="KW-0862">Zinc</keyword>
<sequence length="1679" mass="189361">MGETEEERTSQAGQLFENFIQATTCKGTLQAFSVLCRQLELNPSDHRGFYSSLKTAVTFWKAKGLWGKLDKRAGHKEYSKGRACADTRCLIIGGGPCGFRTAIELALLGAKVVVIEKRDTFSRNNVLHLWPYTIHDLRNLGAKKFYGKFCAGSIDHISIRQLQLMLLKIALIVGVEVHVNVEFVKLLEPPEDQSTDGQGWRAEIRPADNPVSDYEFDVIIGADGRRSTLDGFRRKEFRGKLAIAITANFVNRNTTAEAKVEEISGVAFIFNQKFFLELKEETGIDLENIVYYKDNTHYFVMTAKKQSLLDKGVIINDYIETERLLAFDNVNQEALLSYAREAADFGTNYQLPSLDYAINHYGQPDVAMFDFTCMYASENAALVREKSHRQLLVALVGDSLLEPFWPMGTGCARGFLAAFDTAWMIKGWAQGKEPLDLLSERESIYRLLPQTTAENISKNFEQYTIDPATRYPNLNSSCVRPHQVRHLFISGEQDLSSLERSGQTRRSVSISRRESEVRPGRLLLWCQNQTQDYRGVNVTDLNTSWRSGLALCALIHRQRPELIDFDSLNEADCAKNNQLAFDVAEREFGIQPVTTGKEMDAERGPDKLIMVLYLSKFYEMFHKSTQSVTGLPKEIDANNGDCSSKTANSLYNSINHARKRIPKLDKKLEESDVNRKRKKASSHHEELMSCQTAPPAGEREEQKENKVRSMATQLLARFEENAPSCALRRQSDSESDSDADRPVSLDLTENPRFARPKIEPTHPSTTPDKAKWQPSPYLRLLESNTRSETLHTEHYVESQSSHRLTEIQSECQYSSVSSAYKSSERRPRSPLIPFTPTLSPMMHCLQQLEEQVIQQRKREPLNRKSIKERAQKLSSLFTGNPAQPQTDESSPAVSPSSPPQTIPESSTLSCLLSPAPSLTHKQCSEASETHLKADKHTEIRRVERLDPSKQRTVGKVSSAIGVKAATLAILYETDHRPNNPITLSLTEARRCAESGLVSVRKEFSASLGGSDTCVFCQKRVYIMERLSAEGFFFHRECFRCHICGCSLRLGAHTFDSQQGTFYCKMHFSQRKTSTRHRRGEIQDGGIRSSSITISNHTSTDGTRGQPSGGEFDSSTQQDLQTLPDSKEIISVSEVKDSSKKADPADSAPACPDSPLQKVKRSTAKGEITNKNILWKKKIRSTLPLVLMKKFHRGKPEDKTEVLAEEDGNSDFEEIHESLSSKKPSNPSTDSNCLPTKDNSSTPLDEIPKIPLYRTHVLPEYPKPSSSSPEPIVTSISSDPISFSPKKKLTLSLSEKEKLLNWDLTNPGKSGAEEQQQQHVKPSISLQHDHPEPTHPQPEPAPPLFGFQQWANNLRKSFSKGSNPVVLRRNRPMKARPLSEGSFNVGAVFQDEERCGSLVDEGEARPRTESEIASLLEQVALGSKTSRGTKDDMASLPPRKLNFFSSLRIKRVEGAEQSRGEGQKDILSILSRFRNKASAQQQQQQKSNSSSEDEQEPKLTHSGALQKKKEKIAIRQTKSDELKRLHRAQVIQRQLEEVEEKQRSLEEKGVALEKVLRGENGDDGSTDEAALLQTWFKLVLEKNKLSRYESELMIFAQELELEDTQSRLQQDLRRRMATEDCEKSASELVEEQNILVEIMKVVEKRDKLVSLLEEQRLKEKAEDRDLESLILSRGYQFHWT</sequence>
<comment type="function">
    <text evidence="2 9">Nuclear monooxygenase that promotes depolymerization of F-actin by mediating oxidation of specific methionine residues on actin and regulates the srf signaling. Acts by modifying nuclear actin subunits through the addition of oxygen to form methionine-sulfoxide, leading to promote actin filament severing and prevent repolymerization (By similarity). Acts as a key regulator of the srf signaling pathway elicited by nerve growth factor and serum: mediates oxidation and subsequent depolymerization of nuclear actin, leading to increase mkl1/mrtf-a presence in the nucleus and promote srf:mkl1/mrtf-a-dependent gene transcription (PubMed:24440334).</text>
</comment>
<comment type="catalytic activity">
    <reaction evidence="2">
        <text>L-methionyl-[F-actin] + NADPH + O2 + H(+) = L-methionyl-(R)-S-oxide-[F-actin] + NADP(+) + H2O</text>
        <dbReference type="Rhea" id="RHEA:51308"/>
        <dbReference type="Rhea" id="RHEA-COMP:12953"/>
        <dbReference type="Rhea" id="RHEA-COMP:12956"/>
        <dbReference type="ChEBI" id="CHEBI:15377"/>
        <dbReference type="ChEBI" id="CHEBI:15378"/>
        <dbReference type="ChEBI" id="CHEBI:15379"/>
        <dbReference type="ChEBI" id="CHEBI:16044"/>
        <dbReference type="ChEBI" id="CHEBI:45764"/>
        <dbReference type="ChEBI" id="CHEBI:57783"/>
        <dbReference type="ChEBI" id="CHEBI:58349"/>
        <dbReference type="EC" id="1.14.13.225"/>
    </reaction>
</comment>
<comment type="cofactor">
    <cofactor evidence="4">
        <name>FAD</name>
        <dbReference type="ChEBI" id="CHEBI:57692"/>
    </cofactor>
</comment>
<comment type="subcellular location">
    <subcellularLocation>
        <location evidence="2">Nucleus</location>
    </subcellularLocation>
    <subcellularLocation>
        <location evidence="3">Cytoplasm</location>
    </subcellularLocation>
</comment>
<comment type="alternative products">
    <event type="alternative splicing"/>
    <isoform>
        <id>F1RA39-5</id>
        <name>5</name>
        <sequence type="displayed"/>
    </isoform>
    <isoform>
        <id>F1RA39-1</id>
        <name>1</name>
        <sequence type="described" ref="VSP_061325"/>
    </isoform>
    <isoform>
        <id>F1RA39-2</id>
        <name>2</name>
        <name>S1</name>
        <sequence type="described" ref="VSP_061327 VSP_061330"/>
    </isoform>
    <isoform>
        <id>F1RA39-3</id>
        <name>3</name>
        <name>S3</name>
        <sequence type="described" ref="VSP_061328 VSP_061329"/>
    </isoform>
    <isoform>
        <id>F1RA39-4</id>
        <name>4</name>
        <name>S2</name>
        <sequence type="described" ref="VSP_061326 VSP_061328 VSP_061329"/>
    </isoform>
</comment>
<comment type="disruption phenotype">
    <text evidence="9">Small hearts that fail to undergo normal looping at 24 hours post-fertilization (hpf) with thin, linear morphology compared to wild-type hearts at 48 hpf. moreover, cardiomyocytes hearts are spatially disorganized. Defects in srf:mkl1/mrtf-a-dependent gene transcription.</text>
</comment>
<comment type="similarity">
    <text evidence="10">Belongs to the Mical family.</text>
</comment>
<organism>
    <name type="scientific">Danio rerio</name>
    <name type="common">Zebrafish</name>
    <name type="synonym">Brachydanio rerio</name>
    <dbReference type="NCBI Taxonomy" id="7955"/>
    <lineage>
        <taxon>Eukaryota</taxon>
        <taxon>Metazoa</taxon>
        <taxon>Chordata</taxon>
        <taxon>Craniata</taxon>
        <taxon>Vertebrata</taxon>
        <taxon>Euteleostomi</taxon>
        <taxon>Actinopterygii</taxon>
        <taxon>Neopterygii</taxon>
        <taxon>Teleostei</taxon>
        <taxon>Ostariophysi</taxon>
        <taxon>Cypriniformes</taxon>
        <taxon>Danionidae</taxon>
        <taxon>Danioninae</taxon>
        <taxon>Danio</taxon>
    </lineage>
</organism>
<evidence type="ECO:0000250" key="1"/>
<evidence type="ECO:0000250" key="2">
    <source>
        <dbReference type="UniProtKB" id="O94851"/>
    </source>
</evidence>
<evidence type="ECO:0000250" key="3">
    <source>
        <dbReference type="UniProtKB" id="Q8BML1"/>
    </source>
</evidence>
<evidence type="ECO:0000250" key="4">
    <source>
        <dbReference type="UniProtKB" id="Q8TDZ2"/>
    </source>
</evidence>
<evidence type="ECO:0000255" key="5">
    <source>
        <dbReference type="PROSITE-ProRule" id="PRU00044"/>
    </source>
</evidence>
<evidence type="ECO:0000255" key="6">
    <source>
        <dbReference type="PROSITE-ProRule" id="PRU00125"/>
    </source>
</evidence>
<evidence type="ECO:0000255" key="7">
    <source>
        <dbReference type="PROSITE-ProRule" id="PRU01195"/>
    </source>
</evidence>
<evidence type="ECO:0000256" key="8">
    <source>
        <dbReference type="SAM" id="MobiDB-lite"/>
    </source>
</evidence>
<evidence type="ECO:0000269" key="9">
    <source>
    </source>
</evidence>
<evidence type="ECO:0000305" key="10"/>
<gene>
    <name evidence="2" type="primary">mical2b</name>
    <name type="synonym">si:ch211-192p3.1</name>
</gene>
<accession>F1RA39</accession>
<accession>A0A0A0MPT7</accession>
<accession>E5F2M5</accession>
<accession>F6P3I3</accession>
<accession>J9XHI3</accession>
<accession>J9XHS8</accession>
<accession>J9XJU2</accession>
<accession>J9XNZ0</accession>
<name>MCA2B_DANRE</name>